<comment type="catalytic activity">
    <reaction evidence="1">
        <text>tRNA(Phe) + L-phenylalanine + ATP = L-phenylalanyl-tRNA(Phe) + AMP + diphosphate + H(+)</text>
        <dbReference type="Rhea" id="RHEA:19413"/>
        <dbReference type="Rhea" id="RHEA-COMP:9668"/>
        <dbReference type="Rhea" id="RHEA-COMP:9699"/>
        <dbReference type="ChEBI" id="CHEBI:15378"/>
        <dbReference type="ChEBI" id="CHEBI:30616"/>
        <dbReference type="ChEBI" id="CHEBI:33019"/>
        <dbReference type="ChEBI" id="CHEBI:58095"/>
        <dbReference type="ChEBI" id="CHEBI:78442"/>
        <dbReference type="ChEBI" id="CHEBI:78531"/>
        <dbReference type="ChEBI" id="CHEBI:456215"/>
        <dbReference type="EC" id="6.1.1.20"/>
    </reaction>
</comment>
<comment type="cofactor">
    <cofactor evidence="1">
        <name>Mg(2+)</name>
        <dbReference type="ChEBI" id="CHEBI:18420"/>
    </cofactor>
    <text evidence="1">Binds 2 magnesium ions per tetramer.</text>
</comment>
<comment type="subunit">
    <text evidence="1">Tetramer of two alpha and two beta subunits.</text>
</comment>
<comment type="subcellular location">
    <subcellularLocation>
        <location evidence="1">Cytoplasm</location>
    </subcellularLocation>
</comment>
<comment type="similarity">
    <text evidence="1">Belongs to the class-II aminoacyl-tRNA synthetase family. Phe-tRNA synthetase alpha subunit type 1 subfamily.</text>
</comment>
<sequence>MNKELISEIPLLEDKAVSEIENAASLKDLEKVRLSYLGRKGVVKAYFDDLKNIDDAGEKRDLGAVINVLRNKIDQLITSKENELKDKEVKLKLQNEAVDITLPVRPERIGKIHPLSKVISEVKLIFAHMGFKAVDGPDIEDEFHVFDALNTPSHHPAREEQDTFYLRNKINDKRMVLRTHTSSVQIRTMEKTKTFPIKIVAAGRVYRNDFDATHTPMFHQIEGLYVNENVNMGQLKFTIHCFLSKFFGDKGLRIRFRNSFFPFTEPSAEVDISYKDSKWIEVLGCGMVHPNVFKNVGIDHTKYSGFAFGIGIERLAMLKYQISDLRSFYDNRVSWLNHYGFHFSSLR</sequence>
<proteinExistence type="inferred from homology"/>
<accession>B3CMZ6</accession>
<name>SYFA_WOLPP</name>
<reference key="1">
    <citation type="journal article" date="2008" name="Mol. Biol. Evol.">
        <title>Genome evolution of Wolbachia strain wPip from the Culex pipiens group.</title>
        <authorList>
            <person name="Klasson L."/>
            <person name="Walker T."/>
            <person name="Sebaihia M."/>
            <person name="Sanders M.J."/>
            <person name="Quail M.A."/>
            <person name="Lord A."/>
            <person name="Sanders S."/>
            <person name="Earl J."/>
            <person name="O'Neill S.L."/>
            <person name="Thomson N."/>
            <person name="Sinkins S.P."/>
            <person name="Parkhill J."/>
        </authorList>
    </citation>
    <scope>NUCLEOTIDE SEQUENCE [LARGE SCALE GENOMIC DNA]</scope>
    <source>
        <strain>wPip</strain>
    </source>
</reference>
<dbReference type="EC" id="6.1.1.20" evidence="1"/>
<dbReference type="EMBL" id="AM999887">
    <property type="protein sequence ID" value="CAQ55243.1"/>
    <property type="molecule type" value="Genomic_DNA"/>
</dbReference>
<dbReference type="RefSeq" id="WP_007302505.1">
    <property type="nucleotide sequence ID" value="NC_010981.1"/>
</dbReference>
<dbReference type="SMR" id="B3CMZ6"/>
<dbReference type="KEGG" id="wpi:WP1135"/>
<dbReference type="eggNOG" id="COG0016">
    <property type="taxonomic scope" value="Bacteria"/>
</dbReference>
<dbReference type="HOGENOM" id="CLU_025086_0_1_5"/>
<dbReference type="Proteomes" id="UP000008814">
    <property type="component" value="Chromosome"/>
</dbReference>
<dbReference type="GO" id="GO:0005737">
    <property type="term" value="C:cytoplasm"/>
    <property type="evidence" value="ECO:0007669"/>
    <property type="project" value="UniProtKB-SubCell"/>
</dbReference>
<dbReference type="GO" id="GO:0005524">
    <property type="term" value="F:ATP binding"/>
    <property type="evidence" value="ECO:0007669"/>
    <property type="project" value="UniProtKB-UniRule"/>
</dbReference>
<dbReference type="GO" id="GO:0000287">
    <property type="term" value="F:magnesium ion binding"/>
    <property type="evidence" value="ECO:0007669"/>
    <property type="project" value="UniProtKB-UniRule"/>
</dbReference>
<dbReference type="GO" id="GO:0004826">
    <property type="term" value="F:phenylalanine-tRNA ligase activity"/>
    <property type="evidence" value="ECO:0007669"/>
    <property type="project" value="UniProtKB-UniRule"/>
</dbReference>
<dbReference type="GO" id="GO:0000049">
    <property type="term" value="F:tRNA binding"/>
    <property type="evidence" value="ECO:0007669"/>
    <property type="project" value="InterPro"/>
</dbReference>
<dbReference type="GO" id="GO:0006432">
    <property type="term" value="P:phenylalanyl-tRNA aminoacylation"/>
    <property type="evidence" value="ECO:0007669"/>
    <property type="project" value="UniProtKB-UniRule"/>
</dbReference>
<dbReference type="CDD" id="cd00496">
    <property type="entry name" value="PheRS_alpha_core"/>
    <property type="match status" value="1"/>
</dbReference>
<dbReference type="Gene3D" id="3.30.930.10">
    <property type="entry name" value="Bira Bifunctional Protein, Domain 2"/>
    <property type="match status" value="1"/>
</dbReference>
<dbReference type="HAMAP" id="MF_00281">
    <property type="entry name" value="Phe_tRNA_synth_alpha1"/>
    <property type="match status" value="1"/>
</dbReference>
<dbReference type="InterPro" id="IPR006195">
    <property type="entry name" value="aa-tRNA-synth_II"/>
</dbReference>
<dbReference type="InterPro" id="IPR045864">
    <property type="entry name" value="aa-tRNA-synth_II/BPL/LPL"/>
</dbReference>
<dbReference type="InterPro" id="IPR004529">
    <property type="entry name" value="Phe-tRNA-synth_IIc_asu"/>
</dbReference>
<dbReference type="InterPro" id="IPR004188">
    <property type="entry name" value="Phe-tRNA_ligase_II_N"/>
</dbReference>
<dbReference type="InterPro" id="IPR022911">
    <property type="entry name" value="Phe_tRNA_ligase_alpha1_bac"/>
</dbReference>
<dbReference type="InterPro" id="IPR002319">
    <property type="entry name" value="Phenylalanyl-tRNA_Synthase"/>
</dbReference>
<dbReference type="InterPro" id="IPR010978">
    <property type="entry name" value="tRNA-bd_arm"/>
</dbReference>
<dbReference type="NCBIfam" id="TIGR00468">
    <property type="entry name" value="pheS"/>
    <property type="match status" value="1"/>
</dbReference>
<dbReference type="PANTHER" id="PTHR11538:SF41">
    <property type="entry name" value="PHENYLALANINE--TRNA LIGASE, MITOCHONDRIAL"/>
    <property type="match status" value="1"/>
</dbReference>
<dbReference type="PANTHER" id="PTHR11538">
    <property type="entry name" value="PHENYLALANYL-TRNA SYNTHETASE"/>
    <property type="match status" value="1"/>
</dbReference>
<dbReference type="Pfam" id="PF02912">
    <property type="entry name" value="Phe_tRNA-synt_N"/>
    <property type="match status" value="1"/>
</dbReference>
<dbReference type="Pfam" id="PF01409">
    <property type="entry name" value="tRNA-synt_2d"/>
    <property type="match status" value="1"/>
</dbReference>
<dbReference type="SUPFAM" id="SSF55681">
    <property type="entry name" value="Class II aaRS and biotin synthetases"/>
    <property type="match status" value="1"/>
</dbReference>
<dbReference type="SUPFAM" id="SSF46589">
    <property type="entry name" value="tRNA-binding arm"/>
    <property type="match status" value="1"/>
</dbReference>
<dbReference type="PROSITE" id="PS50862">
    <property type="entry name" value="AA_TRNA_LIGASE_II"/>
    <property type="match status" value="1"/>
</dbReference>
<feature type="chain" id="PRO_1000114927" description="Phenylalanine--tRNA ligase alpha subunit">
    <location>
        <begin position="1"/>
        <end position="347"/>
    </location>
</feature>
<feature type="binding site" evidence="1">
    <location>
        <position position="265"/>
    </location>
    <ligand>
        <name>Mg(2+)</name>
        <dbReference type="ChEBI" id="CHEBI:18420"/>
        <note>shared with beta subunit</note>
    </ligand>
</feature>
<protein>
    <recommendedName>
        <fullName evidence="1">Phenylalanine--tRNA ligase alpha subunit</fullName>
        <ecNumber evidence="1">6.1.1.20</ecNumber>
    </recommendedName>
    <alternativeName>
        <fullName evidence="1">Phenylalanyl-tRNA synthetase alpha subunit</fullName>
        <shortName evidence="1">PheRS</shortName>
    </alternativeName>
</protein>
<keyword id="KW-0030">Aminoacyl-tRNA synthetase</keyword>
<keyword id="KW-0067">ATP-binding</keyword>
<keyword id="KW-0963">Cytoplasm</keyword>
<keyword id="KW-0436">Ligase</keyword>
<keyword id="KW-0460">Magnesium</keyword>
<keyword id="KW-0479">Metal-binding</keyword>
<keyword id="KW-0547">Nucleotide-binding</keyword>
<keyword id="KW-0648">Protein biosynthesis</keyword>
<gene>
    <name evidence="1" type="primary">pheS</name>
    <name type="ordered locus">WP1135</name>
</gene>
<evidence type="ECO:0000255" key="1">
    <source>
        <dbReference type="HAMAP-Rule" id="MF_00281"/>
    </source>
</evidence>
<organism>
    <name type="scientific">Wolbachia pipientis subsp. Culex pipiens (strain wPip)</name>
    <dbReference type="NCBI Taxonomy" id="570417"/>
    <lineage>
        <taxon>Bacteria</taxon>
        <taxon>Pseudomonadati</taxon>
        <taxon>Pseudomonadota</taxon>
        <taxon>Alphaproteobacteria</taxon>
        <taxon>Rickettsiales</taxon>
        <taxon>Anaplasmataceae</taxon>
        <taxon>Wolbachieae</taxon>
        <taxon>Wolbachia</taxon>
    </lineage>
</organism>